<gene>
    <name evidence="1" type="primary">allA</name>
    <name type="synonym">glxA2</name>
</gene>
<protein>
    <recommendedName>
        <fullName evidence="1">Ureidoglycolate lyase</fullName>
        <ecNumber evidence="1">4.3.2.3</ecNumber>
    </recommendedName>
    <alternativeName>
        <fullName evidence="1">Ureidoglycolatase</fullName>
    </alternativeName>
</protein>
<sequence>MKLEVLPLDQKTFSAYGDVIETQERDFFHINNGLVERYHDLAKVEVLEQDRTLISINRAQPAAMPIVVHELERHPLGTQAFVPMNGEAFVVIVALGDDKPELSTLRAFISNGRQGVNYHRNVWHHPLFAWQTVTDFLTVDRGGSDNCDVESIPTHELCFA</sequence>
<keyword id="KW-0456">Lyase</keyword>
<keyword id="KW-0659">Purine metabolism</keyword>
<accession>Q9S4Y6</accession>
<name>ALLA_SALEN</name>
<evidence type="ECO:0000255" key="1">
    <source>
        <dbReference type="HAMAP-Rule" id="MF_00616"/>
    </source>
</evidence>
<comment type="function">
    <text evidence="1">Catalyzes the catabolism of the allantoin degradation intermediate (S)-ureidoglycolate, generating urea and glyoxylate. Involved in the utilization of allantoin as nitrogen source.</text>
</comment>
<comment type="catalytic activity">
    <reaction evidence="1">
        <text>(S)-ureidoglycolate = urea + glyoxylate</text>
        <dbReference type="Rhea" id="RHEA:11304"/>
        <dbReference type="ChEBI" id="CHEBI:16199"/>
        <dbReference type="ChEBI" id="CHEBI:36655"/>
        <dbReference type="ChEBI" id="CHEBI:57296"/>
        <dbReference type="EC" id="4.3.2.3"/>
    </reaction>
</comment>
<comment type="cofactor">
    <cofactor evidence="1">
        <name>Ni(2+)</name>
        <dbReference type="ChEBI" id="CHEBI:49786"/>
    </cofactor>
</comment>
<comment type="pathway">
    <text evidence="1">Nitrogen metabolism; (S)-allantoin degradation.</text>
</comment>
<comment type="subunit">
    <text evidence="1">Homodimer.</text>
</comment>
<comment type="similarity">
    <text evidence="1">Belongs to the ureidoglycolate lyase family.</text>
</comment>
<dbReference type="EC" id="4.3.2.3" evidence="1"/>
<dbReference type="EMBL" id="AF102556">
    <property type="protein sequence ID" value="AAD51884.1"/>
    <property type="molecule type" value="Genomic_DNA"/>
</dbReference>
<dbReference type="RefSeq" id="WP_000764661.1">
    <property type="nucleotide sequence ID" value="NZ_WIDC01000017.1"/>
</dbReference>
<dbReference type="SMR" id="Q9S4Y6"/>
<dbReference type="PATRIC" id="fig|149539.316.peg.535"/>
<dbReference type="OMA" id="ECYFEPG"/>
<dbReference type="UniPathway" id="UPA00395"/>
<dbReference type="GO" id="GO:0004848">
    <property type="term" value="F:ureidoglycolate hydrolase activity"/>
    <property type="evidence" value="ECO:0007669"/>
    <property type="project" value="InterPro"/>
</dbReference>
<dbReference type="GO" id="GO:0050385">
    <property type="term" value="F:ureidoglycolate lyase activity"/>
    <property type="evidence" value="ECO:0007669"/>
    <property type="project" value="UniProtKB-UniRule"/>
</dbReference>
<dbReference type="GO" id="GO:0000256">
    <property type="term" value="P:allantoin catabolic process"/>
    <property type="evidence" value="ECO:0007669"/>
    <property type="project" value="UniProtKB-UniRule"/>
</dbReference>
<dbReference type="GO" id="GO:0006145">
    <property type="term" value="P:purine nucleobase catabolic process"/>
    <property type="evidence" value="ECO:0007669"/>
    <property type="project" value="UniProtKB-UniRule"/>
</dbReference>
<dbReference type="CDD" id="cd20298">
    <property type="entry name" value="cupin_UAH"/>
    <property type="match status" value="1"/>
</dbReference>
<dbReference type="FunFam" id="2.60.120.480:FF:000001">
    <property type="entry name" value="Ureidoglycolate lyase"/>
    <property type="match status" value="1"/>
</dbReference>
<dbReference type="Gene3D" id="2.60.120.480">
    <property type="entry name" value="Ureidoglycolate hydrolase"/>
    <property type="match status" value="1"/>
</dbReference>
<dbReference type="HAMAP" id="MF_00616">
    <property type="entry name" value="Ureidogly_lyase"/>
    <property type="match status" value="1"/>
</dbReference>
<dbReference type="InterPro" id="IPR011051">
    <property type="entry name" value="RmlC_Cupin_sf"/>
</dbReference>
<dbReference type="InterPro" id="IPR047233">
    <property type="entry name" value="UAH_cupin"/>
</dbReference>
<dbReference type="InterPro" id="IPR007247">
    <property type="entry name" value="Ureidogly_lyase"/>
</dbReference>
<dbReference type="InterPro" id="IPR023525">
    <property type="entry name" value="Ureidogly_lyase_bac"/>
</dbReference>
<dbReference type="InterPro" id="IPR024060">
    <property type="entry name" value="Ureidoglycolate_lyase_dom_sf"/>
</dbReference>
<dbReference type="NCBIfam" id="NF002948">
    <property type="entry name" value="PRK03606.1-1"/>
    <property type="match status" value="1"/>
</dbReference>
<dbReference type="NCBIfam" id="NF009932">
    <property type="entry name" value="PRK13395.1"/>
    <property type="match status" value="1"/>
</dbReference>
<dbReference type="PANTHER" id="PTHR21221">
    <property type="entry name" value="UREIDOGLYCOLATE HYDROLASE"/>
    <property type="match status" value="1"/>
</dbReference>
<dbReference type="PANTHER" id="PTHR21221:SF1">
    <property type="entry name" value="UREIDOGLYCOLATE LYASE"/>
    <property type="match status" value="1"/>
</dbReference>
<dbReference type="Pfam" id="PF04115">
    <property type="entry name" value="Ureidogly_lyase"/>
    <property type="match status" value="1"/>
</dbReference>
<dbReference type="PIRSF" id="PIRSF017306">
    <property type="entry name" value="Ureidogly_hydro"/>
    <property type="match status" value="1"/>
</dbReference>
<dbReference type="SUPFAM" id="SSF51182">
    <property type="entry name" value="RmlC-like cupins"/>
    <property type="match status" value="1"/>
</dbReference>
<proteinExistence type="inferred from homology"/>
<feature type="chain" id="PRO_0000120557" description="Ureidoglycolate lyase">
    <location>
        <begin position="1"/>
        <end position="160"/>
    </location>
</feature>
<reference key="1">
    <citation type="journal article" date="1999" name="Mol. Microbiol.">
        <title>Identification and molecular characterization of a novel Salmonella enteritidis pathogenicity islet encoding an ABC transporter.</title>
        <authorList>
            <person name="Pattery T."/>
            <person name="Hernalsteens J.-P."/>
            <person name="De Greve H."/>
        </authorList>
    </citation>
    <scope>NUCLEOTIDE SEQUENCE [GENOMIC DNA]</scope>
    <source>
        <strain>S1400</strain>
    </source>
</reference>
<organism>
    <name type="scientific">Salmonella enteritidis</name>
    <dbReference type="NCBI Taxonomy" id="149539"/>
    <lineage>
        <taxon>Bacteria</taxon>
        <taxon>Pseudomonadati</taxon>
        <taxon>Pseudomonadota</taxon>
        <taxon>Gammaproteobacteria</taxon>
        <taxon>Enterobacterales</taxon>
        <taxon>Enterobacteriaceae</taxon>
        <taxon>Salmonella</taxon>
    </lineage>
</organism>